<sequence length="776" mass="86701">MRNSRLLLPMAAASATAGITAAAYFPAIFLFILFLLIILIKTRHAFLIIVCFFSFILFFVLYAVTDSQNVSSYRQGTYQFKAVIDTIPKIDGDRMSMMVETPDKEKWAAAYRIQSAGEKEQLLYIEPGMSCELTGTLEEPNHATVPGAFDYNEYLYRQHIHWNYSVTSIQNCSEPENFKYKVLSLRKHIISFTNSLLPPDSTGIVQALTVGDRFYVEDEVLTAYQKLGVVHLLAISGLHVGILTAGLFYIMIRLGITREKASILLLLFLPLYVMLTGAAPSVLRAALMSGVYLAGSLVKWRVRSATAICLSYIVLLLFNPYHLFEAGFQLSFAVSFSLILSSSIFQQVKTSLGQLTIVSLIAQLGSLPILLYHFHQFSIISVPMNMLMVPFYTFCILPGAVAGVLLLSLSASFGRLFFSWFDLLISWINRLITNIADVDVFTIMIAHPAPVLLFLFTVTIILLLMAIEKRSLSQLMVTGGICCTVMFLLFIYPCLSSEGEVDMIDIGQGDSMFVGAPHQRGRVLIDTGGTLSYSSEPWREKQHPFSLGEKVLIPFLTAKGIKQLDALILTHADQDHIGEAEILLKHHKVKRLVIPKGFVSEPKDEKVLQAAREEGVAIEEVKRGDVLQIKDLQFHVLSPEAPDPASKNNSSLVLWMETGGMSWILTGDLEKEGEQEVMNVFPNIKADVLKVGHHGSKGSTGEEFIQQLQPKTAIISAGKNNRYHHPHQKVLQLLQRHSIRVLRTDQNGTIQYRYKNRVGTFSVYPPYDTSDITETN</sequence>
<dbReference type="EMBL" id="L15202">
    <property type="protein sequence ID" value="AAC36907.1"/>
    <property type="molecule type" value="Unassigned_DNA"/>
</dbReference>
<dbReference type="EMBL" id="D84432">
    <property type="protein sequence ID" value="BAA12454.1"/>
    <property type="molecule type" value="Genomic_DNA"/>
</dbReference>
<dbReference type="EMBL" id="AL009126">
    <property type="protein sequence ID" value="CAB14499.1"/>
    <property type="molecule type" value="Genomic_DNA"/>
</dbReference>
<dbReference type="PIR" id="S39865">
    <property type="entry name" value="S39865"/>
</dbReference>
<dbReference type="RefSeq" id="NP_390435.1">
    <property type="nucleotide sequence ID" value="NC_000964.3"/>
</dbReference>
<dbReference type="RefSeq" id="WP_009967776.1">
    <property type="nucleotide sequence ID" value="NZ_OZ025638.1"/>
</dbReference>
<dbReference type="SMR" id="P39695"/>
<dbReference type="FunCoup" id="P39695">
    <property type="interactions" value="232"/>
</dbReference>
<dbReference type="IntAct" id="P39695">
    <property type="interactions" value="2"/>
</dbReference>
<dbReference type="STRING" id="224308.BSU25570"/>
<dbReference type="TCDB" id="3.A.11.1.1">
    <property type="family name" value="the bacterial competence-related dna transformation transporter (dna-t) family"/>
</dbReference>
<dbReference type="PaxDb" id="224308-BSU25570"/>
<dbReference type="EnsemblBacteria" id="CAB14499">
    <property type="protein sequence ID" value="CAB14499"/>
    <property type="gene ID" value="BSU_25570"/>
</dbReference>
<dbReference type="GeneID" id="937839"/>
<dbReference type="KEGG" id="bsu:BSU25570"/>
<dbReference type="PATRIC" id="fig|224308.179.peg.2780"/>
<dbReference type="eggNOG" id="COG0658">
    <property type="taxonomic scope" value="Bacteria"/>
</dbReference>
<dbReference type="eggNOG" id="COG2333">
    <property type="taxonomic scope" value="Bacteria"/>
</dbReference>
<dbReference type="InParanoid" id="P39695"/>
<dbReference type="OrthoDB" id="9761531at2"/>
<dbReference type="PhylomeDB" id="P39695"/>
<dbReference type="BioCyc" id="BSUB:BSU25570-MONOMER"/>
<dbReference type="Proteomes" id="UP000001570">
    <property type="component" value="Chromosome"/>
</dbReference>
<dbReference type="GO" id="GO:0005886">
    <property type="term" value="C:plasma membrane"/>
    <property type="evidence" value="ECO:0000318"/>
    <property type="project" value="GO_Central"/>
</dbReference>
<dbReference type="GO" id="GO:0030420">
    <property type="term" value="P:establishment of competence for transformation"/>
    <property type="evidence" value="ECO:0007669"/>
    <property type="project" value="UniProtKB-KW"/>
</dbReference>
<dbReference type="CDD" id="cd07731">
    <property type="entry name" value="ComA-like_MBL-fold"/>
    <property type="match status" value="1"/>
</dbReference>
<dbReference type="Gene3D" id="3.60.15.10">
    <property type="entry name" value="Ribonuclease Z/Hydroxyacylglutathione hydrolase-like"/>
    <property type="match status" value="1"/>
</dbReference>
<dbReference type="InterPro" id="IPR035681">
    <property type="entry name" value="ComA-like_MBL"/>
</dbReference>
<dbReference type="InterPro" id="IPR004477">
    <property type="entry name" value="ComEC_N"/>
</dbReference>
<dbReference type="InterPro" id="IPR004797">
    <property type="entry name" value="Competence_ComEC/Rec2"/>
</dbReference>
<dbReference type="InterPro" id="IPR052159">
    <property type="entry name" value="Competence_DNA_uptake"/>
</dbReference>
<dbReference type="InterPro" id="IPR025405">
    <property type="entry name" value="DUF4131"/>
</dbReference>
<dbReference type="InterPro" id="IPR001279">
    <property type="entry name" value="Metallo-B-lactamas"/>
</dbReference>
<dbReference type="InterPro" id="IPR036866">
    <property type="entry name" value="RibonucZ/Hydroxyglut_hydro"/>
</dbReference>
<dbReference type="NCBIfam" id="TIGR00360">
    <property type="entry name" value="ComEC_N-term"/>
    <property type="match status" value="1"/>
</dbReference>
<dbReference type="NCBIfam" id="TIGR00361">
    <property type="entry name" value="ComEC_Rec2"/>
    <property type="match status" value="1"/>
</dbReference>
<dbReference type="PANTHER" id="PTHR30619">
    <property type="entry name" value="DNA INTERNALIZATION/COMPETENCE PROTEIN COMEC/REC2"/>
    <property type="match status" value="1"/>
</dbReference>
<dbReference type="PANTHER" id="PTHR30619:SF1">
    <property type="entry name" value="RECOMBINATION PROTEIN 2"/>
    <property type="match status" value="1"/>
</dbReference>
<dbReference type="Pfam" id="PF03772">
    <property type="entry name" value="Competence"/>
    <property type="match status" value="1"/>
</dbReference>
<dbReference type="Pfam" id="PF13567">
    <property type="entry name" value="DUF4131"/>
    <property type="match status" value="1"/>
</dbReference>
<dbReference type="Pfam" id="PF00753">
    <property type="entry name" value="Lactamase_B"/>
    <property type="match status" value="1"/>
</dbReference>
<dbReference type="SMART" id="SM00849">
    <property type="entry name" value="Lactamase_B"/>
    <property type="match status" value="1"/>
</dbReference>
<dbReference type="SUPFAM" id="SSF56281">
    <property type="entry name" value="Metallo-hydrolase/oxidoreductase"/>
    <property type="match status" value="1"/>
</dbReference>
<reference key="1">
    <citation type="journal article" date="1993" name="Mol. Microbiol.">
        <title>Characterization of comE, a late competence operon of Bacillus subtilis required for the binding and uptake of transforming DNA.</title>
        <authorList>
            <person name="Hahn J."/>
            <person name="Inamine G."/>
            <person name="Kozlov Y."/>
            <person name="Dubnau D.A."/>
        </authorList>
    </citation>
    <scope>NUCLEOTIDE SEQUENCE [GENOMIC DNA]</scope>
    <scope>FUNCTION</scope>
</reference>
<reference key="2">
    <citation type="journal article" date="1996" name="Microbiology">
        <title>Systematic sequencing of the 283 kb 210 degrees-232 degrees region of the Bacillus subtilis genome containing the skin element and many sporulation genes.</title>
        <authorList>
            <person name="Mizuno M."/>
            <person name="Masuda S."/>
            <person name="Takemaru K."/>
            <person name="Hosono S."/>
            <person name="Sato T."/>
            <person name="Takeuchi M."/>
            <person name="Kobayashi Y."/>
        </authorList>
    </citation>
    <scope>NUCLEOTIDE SEQUENCE [GENOMIC DNA]</scope>
    <source>
        <strain>168 / JH642</strain>
    </source>
</reference>
<reference key="3">
    <citation type="journal article" date="1997" name="Nature">
        <title>The complete genome sequence of the Gram-positive bacterium Bacillus subtilis.</title>
        <authorList>
            <person name="Kunst F."/>
            <person name="Ogasawara N."/>
            <person name="Moszer I."/>
            <person name="Albertini A.M."/>
            <person name="Alloni G."/>
            <person name="Azevedo V."/>
            <person name="Bertero M.G."/>
            <person name="Bessieres P."/>
            <person name="Bolotin A."/>
            <person name="Borchert S."/>
            <person name="Borriss R."/>
            <person name="Boursier L."/>
            <person name="Brans A."/>
            <person name="Braun M."/>
            <person name="Brignell S.C."/>
            <person name="Bron S."/>
            <person name="Brouillet S."/>
            <person name="Bruschi C.V."/>
            <person name="Caldwell B."/>
            <person name="Capuano V."/>
            <person name="Carter N.M."/>
            <person name="Choi S.-K."/>
            <person name="Codani J.-J."/>
            <person name="Connerton I.F."/>
            <person name="Cummings N.J."/>
            <person name="Daniel R.A."/>
            <person name="Denizot F."/>
            <person name="Devine K.M."/>
            <person name="Duesterhoeft A."/>
            <person name="Ehrlich S.D."/>
            <person name="Emmerson P.T."/>
            <person name="Entian K.-D."/>
            <person name="Errington J."/>
            <person name="Fabret C."/>
            <person name="Ferrari E."/>
            <person name="Foulger D."/>
            <person name="Fritz C."/>
            <person name="Fujita M."/>
            <person name="Fujita Y."/>
            <person name="Fuma S."/>
            <person name="Galizzi A."/>
            <person name="Galleron N."/>
            <person name="Ghim S.-Y."/>
            <person name="Glaser P."/>
            <person name="Goffeau A."/>
            <person name="Golightly E.J."/>
            <person name="Grandi G."/>
            <person name="Guiseppi G."/>
            <person name="Guy B.J."/>
            <person name="Haga K."/>
            <person name="Haiech J."/>
            <person name="Harwood C.R."/>
            <person name="Henaut A."/>
            <person name="Hilbert H."/>
            <person name="Holsappel S."/>
            <person name="Hosono S."/>
            <person name="Hullo M.-F."/>
            <person name="Itaya M."/>
            <person name="Jones L.-M."/>
            <person name="Joris B."/>
            <person name="Karamata D."/>
            <person name="Kasahara Y."/>
            <person name="Klaerr-Blanchard M."/>
            <person name="Klein C."/>
            <person name="Kobayashi Y."/>
            <person name="Koetter P."/>
            <person name="Koningstein G."/>
            <person name="Krogh S."/>
            <person name="Kumano M."/>
            <person name="Kurita K."/>
            <person name="Lapidus A."/>
            <person name="Lardinois S."/>
            <person name="Lauber J."/>
            <person name="Lazarevic V."/>
            <person name="Lee S.-M."/>
            <person name="Levine A."/>
            <person name="Liu H."/>
            <person name="Masuda S."/>
            <person name="Mauel C."/>
            <person name="Medigue C."/>
            <person name="Medina N."/>
            <person name="Mellado R.P."/>
            <person name="Mizuno M."/>
            <person name="Moestl D."/>
            <person name="Nakai S."/>
            <person name="Noback M."/>
            <person name="Noone D."/>
            <person name="O'Reilly M."/>
            <person name="Ogawa K."/>
            <person name="Ogiwara A."/>
            <person name="Oudega B."/>
            <person name="Park S.-H."/>
            <person name="Parro V."/>
            <person name="Pohl T.M."/>
            <person name="Portetelle D."/>
            <person name="Porwollik S."/>
            <person name="Prescott A.M."/>
            <person name="Presecan E."/>
            <person name="Pujic P."/>
            <person name="Purnelle B."/>
            <person name="Rapoport G."/>
            <person name="Rey M."/>
            <person name="Reynolds S."/>
            <person name="Rieger M."/>
            <person name="Rivolta C."/>
            <person name="Rocha E."/>
            <person name="Roche B."/>
            <person name="Rose M."/>
            <person name="Sadaie Y."/>
            <person name="Sato T."/>
            <person name="Scanlan E."/>
            <person name="Schleich S."/>
            <person name="Schroeter R."/>
            <person name="Scoffone F."/>
            <person name="Sekiguchi J."/>
            <person name="Sekowska A."/>
            <person name="Seror S.J."/>
            <person name="Serror P."/>
            <person name="Shin B.-S."/>
            <person name="Soldo B."/>
            <person name="Sorokin A."/>
            <person name="Tacconi E."/>
            <person name="Takagi T."/>
            <person name="Takahashi H."/>
            <person name="Takemaru K."/>
            <person name="Takeuchi M."/>
            <person name="Tamakoshi A."/>
            <person name="Tanaka T."/>
            <person name="Terpstra P."/>
            <person name="Tognoni A."/>
            <person name="Tosato V."/>
            <person name="Uchiyama S."/>
            <person name="Vandenbol M."/>
            <person name="Vannier F."/>
            <person name="Vassarotti A."/>
            <person name="Viari A."/>
            <person name="Wambutt R."/>
            <person name="Wedler E."/>
            <person name="Wedler H."/>
            <person name="Weitzenegger T."/>
            <person name="Winters P."/>
            <person name="Wipat A."/>
            <person name="Yamamoto H."/>
            <person name="Yamane K."/>
            <person name="Yasumoto K."/>
            <person name="Yata K."/>
            <person name="Yoshida K."/>
            <person name="Yoshikawa H.-F."/>
            <person name="Zumstein E."/>
            <person name="Yoshikawa H."/>
            <person name="Danchin A."/>
        </authorList>
    </citation>
    <scope>NUCLEOTIDE SEQUENCE [LARGE SCALE GENOMIC DNA]</scope>
    <source>
        <strain>168</strain>
    </source>
</reference>
<reference key="4">
    <citation type="journal article" date="2002" name="J. Bacteriol.">
        <title>Whole-genome analysis of genes regulated by the Bacillus subtilis competence transcription factor ComK.</title>
        <authorList>
            <person name="Ogura M."/>
            <person name="Yamaguchi H."/>
            <person name="Kobayashi K."/>
            <person name="Ogasawara N."/>
            <person name="Fujita Y."/>
            <person name="Tanaka T."/>
        </authorList>
    </citation>
    <scope>INDUCTION</scope>
    <source>
        <strain>168 / CU741</strain>
    </source>
</reference>
<reference key="5">
    <citation type="journal article" date="2007" name="Mol. Microbiol.">
        <title>Multiple interactions among the competence proteins of Bacillus subtilis.</title>
        <authorList>
            <person name="Kramer N."/>
            <person name="Hahn J."/>
            <person name="Dubnau D."/>
        </authorList>
    </citation>
    <scope>DISRUPTION PHENOTYPE</scope>
    <source>
        <strain>168</strain>
    </source>
</reference>
<name>COMEC_BACSU</name>
<keyword id="KW-1003">Cell membrane</keyword>
<keyword id="KW-0178">Competence</keyword>
<keyword id="KW-0472">Membrane</keyword>
<keyword id="KW-1185">Reference proteome</keyword>
<keyword id="KW-0812">Transmembrane</keyword>
<keyword id="KW-1133">Transmembrane helix</keyword>
<keyword id="KW-0813">Transport</keyword>
<feature type="chain" id="PRO_0000090009" description="ComE operon protein 3">
    <location>
        <begin position="1"/>
        <end position="776"/>
    </location>
</feature>
<feature type="transmembrane region" description="Helical" evidence="1">
    <location>
        <begin position="19"/>
        <end position="39"/>
    </location>
</feature>
<feature type="transmembrane region" description="Helical" evidence="1">
    <location>
        <begin position="45"/>
        <end position="65"/>
    </location>
</feature>
<feature type="transmembrane region" description="Helical" evidence="1">
    <location>
        <begin position="232"/>
        <end position="252"/>
    </location>
</feature>
<feature type="transmembrane region" description="Helical" evidence="1">
    <location>
        <begin position="263"/>
        <end position="283"/>
    </location>
</feature>
<feature type="transmembrane region" description="Helical" evidence="1">
    <location>
        <begin position="308"/>
        <end position="328"/>
    </location>
</feature>
<feature type="transmembrane region" description="Helical" evidence="1">
    <location>
        <begin position="352"/>
        <end position="372"/>
    </location>
</feature>
<feature type="transmembrane region" description="Helical" evidence="1">
    <location>
        <begin position="387"/>
        <end position="407"/>
    </location>
</feature>
<feature type="transmembrane region" description="Helical" evidence="1">
    <location>
        <begin position="416"/>
        <end position="436"/>
    </location>
</feature>
<feature type="transmembrane region" description="Helical" evidence="1">
    <location>
        <begin position="443"/>
        <end position="463"/>
    </location>
</feature>
<feature type="transmembrane region" description="Helical" evidence="1">
    <location>
        <begin position="475"/>
        <end position="495"/>
    </location>
</feature>
<feature type="sequence conflict" description="In Ref. 1; AAC36907." evidence="5" ref="1">
    <original>V</original>
    <variation>I</variation>
    <location>
        <position position="451"/>
    </location>
</feature>
<feature type="sequence conflict" description="In Ref. 1; AAC36907." evidence="5" ref="1">
    <original>P</original>
    <variation>K</variation>
    <location>
        <position position="639"/>
    </location>
</feature>
<accession>P39695</accession>
<gene>
    <name type="primary">comEC</name>
    <name type="synonym">comE3</name>
    <name type="ordered locus">BSU25570</name>
</gene>
<comment type="function">
    <text evidence="4">The comE operon is required for the binding and uptake of transforming DNA. ComEC is required for internalization but is dispensable for DNA binding.</text>
</comment>
<comment type="subcellular location">
    <subcellularLocation>
        <location evidence="5">Cell membrane</location>
        <topology evidence="5">Multi-pass membrane protein</topology>
    </subcellularLocation>
</comment>
<comment type="induction">
    <text evidence="2">Expression activated by ComK (PubMed:11948146).</text>
</comment>
<comment type="disruption phenotype">
    <text evidence="3">Destabilization of ComFA (PubMed:17630974).</text>
</comment>
<comment type="similarity">
    <text evidence="5">To H.influenzae REC2, N.gonorrhoeae ComA and E.coli YcaI.</text>
</comment>
<proteinExistence type="evidence at transcript level"/>
<organism>
    <name type="scientific">Bacillus subtilis (strain 168)</name>
    <dbReference type="NCBI Taxonomy" id="224308"/>
    <lineage>
        <taxon>Bacteria</taxon>
        <taxon>Bacillati</taxon>
        <taxon>Bacillota</taxon>
        <taxon>Bacilli</taxon>
        <taxon>Bacillales</taxon>
        <taxon>Bacillaceae</taxon>
        <taxon>Bacillus</taxon>
    </lineage>
</organism>
<evidence type="ECO:0000255" key="1"/>
<evidence type="ECO:0000269" key="2">
    <source>
    </source>
</evidence>
<evidence type="ECO:0000269" key="3">
    <source>
    </source>
</evidence>
<evidence type="ECO:0000269" key="4">
    <source>
    </source>
</evidence>
<evidence type="ECO:0000305" key="5"/>
<protein>
    <recommendedName>
        <fullName>ComE operon protein 3</fullName>
    </recommendedName>
</protein>